<sequence>MTRLTLALDVMGGDFGPSVTVPAALQALNSNSQLTLLLVGNPDAITPLLAKADFEQRSRLQIIPAQSVIASDARPSQAIRASRGSSMRVALELVKEGRAQACVSAGNTGALMGLAKLLLKPLEGIERPALVTVLPHQQKGKTVVLDLGANVDCDSTMLVQFAIMGSVLAEEVVEIPNPRVALLNIGEEEVKGLDSIRDASAVLKTIPSINYIGYLEANELLTGKTDVLVCDGFTGNVTLKTMEGVVRMFLSLLKSQGEGKKRSWWLLLLKRWLQKSLTRRFSHLNPDQYNGACLLGLRGTVIKSHGAANQRAFAVAIEQAVQAVQRQVPQRIAARLESVYPAGFELLDGGKSGTLR</sequence>
<organism>
    <name type="scientific">Escherichia coli (strain SMS-3-5 / SECEC)</name>
    <dbReference type="NCBI Taxonomy" id="439855"/>
    <lineage>
        <taxon>Bacteria</taxon>
        <taxon>Pseudomonadati</taxon>
        <taxon>Pseudomonadota</taxon>
        <taxon>Gammaproteobacteria</taxon>
        <taxon>Enterobacterales</taxon>
        <taxon>Enterobacteriaceae</taxon>
        <taxon>Escherichia</taxon>
    </lineage>
</organism>
<accession>B1LI55</accession>
<proteinExistence type="inferred from homology"/>
<feature type="chain" id="PRO_1000116380" description="Phosphate acyltransferase">
    <location>
        <begin position="1"/>
        <end position="356"/>
    </location>
</feature>
<gene>
    <name evidence="1" type="primary">plsX</name>
    <name type="ordered locus">EcSMS35_2037</name>
</gene>
<reference key="1">
    <citation type="journal article" date="2008" name="J. Bacteriol.">
        <title>Insights into the environmental resistance gene pool from the genome sequence of the multidrug-resistant environmental isolate Escherichia coli SMS-3-5.</title>
        <authorList>
            <person name="Fricke W.F."/>
            <person name="Wright M.S."/>
            <person name="Lindell A.H."/>
            <person name="Harkins D.M."/>
            <person name="Baker-Austin C."/>
            <person name="Ravel J."/>
            <person name="Stepanauskas R."/>
        </authorList>
    </citation>
    <scope>NUCLEOTIDE SEQUENCE [LARGE SCALE GENOMIC DNA]</scope>
    <source>
        <strain>SMS-3-5 / SECEC</strain>
    </source>
</reference>
<protein>
    <recommendedName>
        <fullName evidence="1">Phosphate acyltransferase</fullName>
        <ecNumber evidence="1">2.3.1.274</ecNumber>
    </recommendedName>
    <alternativeName>
        <fullName evidence="1">Acyl-ACP phosphotransacylase</fullName>
    </alternativeName>
    <alternativeName>
        <fullName evidence="1">Acyl-[acyl-carrier-protein]--phosphate acyltransferase</fullName>
    </alternativeName>
    <alternativeName>
        <fullName evidence="1">Phosphate-acyl-ACP acyltransferase</fullName>
    </alternativeName>
</protein>
<evidence type="ECO:0000255" key="1">
    <source>
        <dbReference type="HAMAP-Rule" id="MF_00019"/>
    </source>
</evidence>
<name>PLSX_ECOSM</name>
<dbReference type="EC" id="2.3.1.274" evidence="1"/>
<dbReference type="EMBL" id="CP000970">
    <property type="protein sequence ID" value="ACB15885.1"/>
    <property type="molecule type" value="Genomic_DNA"/>
</dbReference>
<dbReference type="RefSeq" id="WP_000197578.1">
    <property type="nucleotide sequence ID" value="NC_010498.1"/>
</dbReference>
<dbReference type="SMR" id="B1LI55"/>
<dbReference type="GeneID" id="93776318"/>
<dbReference type="KEGG" id="ecm:EcSMS35_2037"/>
<dbReference type="HOGENOM" id="CLU_039379_1_0_6"/>
<dbReference type="UniPathway" id="UPA00085"/>
<dbReference type="Proteomes" id="UP000007011">
    <property type="component" value="Chromosome"/>
</dbReference>
<dbReference type="GO" id="GO:0005737">
    <property type="term" value="C:cytoplasm"/>
    <property type="evidence" value="ECO:0007669"/>
    <property type="project" value="UniProtKB-SubCell"/>
</dbReference>
<dbReference type="GO" id="GO:0043811">
    <property type="term" value="F:phosphate:acyl-[acyl carrier protein] acyltransferase activity"/>
    <property type="evidence" value="ECO:0007669"/>
    <property type="project" value="UniProtKB-UniRule"/>
</dbReference>
<dbReference type="GO" id="GO:0006633">
    <property type="term" value="P:fatty acid biosynthetic process"/>
    <property type="evidence" value="ECO:0007669"/>
    <property type="project" value="UniProtKB-UniRule"/>
</dbReference>
<dbReference type="GO" id="GO:0008654">
    <property type="term" value="P:phospholipid biosynthetic process"/>
    <property type="evidence" value="ECO:0007669"/>
    <property type="project" value="UniProtKB-KW"/>
</dbReference>
<dbReference type="FunFam" id="3.40.718.10:FF:000008">
    <property type="entry name" value="Phosphate acyltransferase"/>
    <property type="match status" value="1"/>
</dbReference>
<dbReference type="Gene3D" id="3.40.718.10">
    <property type="entry name" value="Isopropylmalate Dehydrogenase"/>
    <property type="match status" value="1"/>
</dbReference>
<dbReference type="HAMAP" id="MF_00019">
    <property type="entry name" value="PlsX"/>
    <property type="match status" value="1"/>
</dbReference>
<dbReference type="InterPro" id="IPR003664">
    <property type="entry name" value="FA_synthesis"/>
</dbReference>
<dbReference type="InterPro" id="IPR012281">
    <property type="entry name" value="Phospholipid_synth_PlsX-like"/>
</dbReference>
<dbReference type="NCBIfam" id="TIGR00182">
    <property type="entry name" value="plsX"/>
    <property type="match status" value="1"/>
</dbReference>
<dbReference type="PANTHER" id="PTHR30100">
    <property type="entry name" value="FATTY ACID/PHOSPHOLIPID SYNTHESIS PROTEIN PLSX"/>
    <property type="match status" value="1"/>
</dbReference>
<dbReference type="PANTHER" id="PTHR30100:SF1">
    <property type="entry name" value="PHOSPHATE ACYLTRANSFERASE"/>
    <property type="match status" value="1"/>
</dbReference>
<dbReference type="Pfam" id="PF02504">
    <property type="entry name" value="FA_synthesis"/>
    <property type="match status" value="1"/>
</dbReference>
<dbReference type="PIRSF" id="PIRSF002465">
    <property type="entry name" value="Phsphlp_syn_PlsX"/>
    <property type="match status" value="1"/>
</dbReference>
<dbReference type="SUPFAM" id="SSF53659">
    <property type="entry name" value="Isocitrate/Isopropylmalate dehydrogenase-like"/>
    <property type="match status" value="1"/>
</dbReference>
<comment type="function">
    <text evidence="1">Catalyzes the reversible formation of acyl-phosphate (acyl-PO(4)) from acyl-[acyl-carrier-protein] (acyl-ACP). This enzyme utilizes acyl-ACP as fatty acyl donor, but not acyl-CoA.</text>
</comment>
<comment type="catalytic activity">
    <reaction evidence="1">
        <text>a fatty acyl-[ACP] + phosphate = an acyl phosphate + holo-[ACP]</text>
        <dbReference type="Rhea" id="RHEA:42292"/>
        <dbReference type="Rhea" id="RHEA-COMP:9685"/>
        <dbReference type="Rhea" id="RHEA-COMP:14125"/>
        <dbReference type="ChEBI" id="CHEBI:43474"/>
        <dbReference type="ChEBI" id="CHEBI:59918"/>
        <dbReference type="ChEBI" id="CHEBI:64479"/>
        <dbReference type="ChEBI" id="CHEBI:138651"/>
        <dbReference type="EC" id="2.3.1.274"/>
    </reaction>
</comment>
<comment type="pathway">
    <text evidence="1">Lipid metabolism; phospholipid metabolism.</text>
</comment>
<comment type="subunit">
    <text evidence="1">Homodimer. Probably interacts with PlsY.</text>
</comment>
<comment type="subcellular location">
    <subcellularLocation>
        <location evidence="1">Cytoplasm</location>
    </subcellularLocation>
    <text evidence="1">Associated with the membrane possibly through PlsY.</text>
</comment>
<comment type="similarity">
    <text evidence="1">Belongs to the PlsX family.</text>
</comment>
<keyword id="KW-0963">Cytoplasm</keyword>
<keyword id="KW-0444">Lipid biosynthesis</keyword>
<keyword id="KW-0443">Lipid metabolism</keyword>
<keyword id="KW-0594">Phospholipid biosynthesis</keyword>
<keyword id="KW-1208">Phospholipid metabolism</keyword>
<keyword id="KW-0808">Transferase</keyword>